<evidence type="ECO:0000250" key="1"/>
<evidence type="ECO:0000250" key="2">
    <source>
        <dbReference type="UniProtKB" id="O04385"/>
    </source>
</evidence>
<evidence type="ECO:0000255" key="3">
    <source>
        <dbReference type="PROSITE-ProRule" id="PRU01020"/>
    </source>
</evidence>
<evidence type="ECO:0000269" key="4">
    <source>
    </source>
</evidence>
<evidence type="ECO:0000269" key="5">
    <source>
    </source>
</evidence>
<evidence type="ECO:0000269" key="6">
    <source>
    </source>
</evidence>
<evidence type="ECO:0000303" key="7">
    <source>
    </source>
</evidence>
<evidence type="ECO:0000303" key="8">
    <source>
    </source>
</evidence>
<evidence type="ECO:0000303" key="9">
    <source>
    </source>
</evidence>
<evidence type="ECO:0000305" key="10"/>
<evidence type="ECO:0000305" key="11">
    <source>
    </source>
</evidence>
<evidence type="ECO:0000305" key="12">
    <source>
    </source>
</evidence>
<accession>Q9UQY0</accession>
<accession>A0A0F0HZ60</accession>
<accession>Q6UEF8</accession>
<reference key="1">
    <citation type="journal article" date="1999" name="Appl. Environ. Microbiol.">
        <title>Cloning and characterization of the O-methyltransferase I gene (dmtA) from Aspergillus parasiticus associated with the conversions of demethylsterigmatocystin to sterigmatocystin and dihydrodemethylsterigmatocystin to dihydrosterigmatocystin in aflatoxin biosynthesis.</title>
        <authorList>
            <person name="Motomura M."/>
            <person name="Chihaya N."/>
            <person name="Shinozawa T."/>
            <person name="Hamasaki T."/>
            <person name="Yabe K."/>
        </authorList>
    </citation>
    <scope>NUCLEOTIDE SEQUENCE [GENOMIC DNA / MRNA]</scope>
    <scope>PROTEIN SEQUENCE OF 2-47</scope>
    <scope>FUNCTION</scope>
    <scope>PATHWAY</scope>
    <scope>CATALYTIC ACTIVITY</scope>
    <source>
        <strain>NIAH-26</strain>
    </source>
</reference>
<reference key="2">
    <citation type="journal article" date="2000" name="Gene">
        <title>Cloning and characterization of avfA and omtB genes involved in aflatoxin biosynthesis in three Aspergillus species.</title>
        <authorList>
            <person name="Yu J."/>
            <person name="Woloshuk C.P."/>
            <person name="Bhatnagar D."/>
            <person name="Cleveland T.E."/>
        </authorList>
    </citation>
    <scope>NUCLEOTIDE SEQUENCE [GENOMIC DNA]</scope>
    <scope>FUNCTION</scope>
    <source>
        <strain>ATCC 56775 / NRRL 5862 / SRRC 143 / SU-1</strain>
    </source>
</reference>
<reference key="3">
    <citation type="submission" date="2015-02" db="EMBL/GenBank/DDBJ databases">
        <title>Draft genome sequence of Aspergillus parasiticus SU-1.</title>
        <authorList>
            <person name="Yu J."/>
            <person name="Fedorova N."/>
            <person name="Yin Y."/>
            <person name="Losada L."/>
            <person name="Zafar N."/>
            <person name="Taujale R."/>
            <person name="Ehrlich K.C."/>
            <person name="Bhatnagar D."/>
            <person name="Cleveland T.E."/>
            <person name="Bennett J.W."/>
            <person name="Nierman W.C."/>
        </authorList>
    </citation>
    <scope>NUCLEOTIDE SEQUENCE [LARGE SCALE GENOMIC DNA]</scope>
    <source>
        <strain>ATCC 56775 / NRRL 5862 / SRRC 143 / SU-1</strain>
    </source>
</reference>
<reference key="4">
    <citation type="journal article" date="1998" name="Appl. Environ. Microbiol.">
        <title>Purification and characterization of O-methyltransferase I involved in conversion of demethylsterigmatocystin to sterigmatocystin and of dihydrodemethylsterigmatocystin to dihydrosterigmatocystin during aflatoxin biosynthesis.</title>
        <authorList>
            <person name="Yabe K."/>
            <person name="Matsushima K."/>
            <person name="Koyama T."/>
            <person name="Hamasaki T."/>
        </authorList>
    </citation>
    <scope>FUNCTION</scope>
    <scope>BIOPHYSICOCHEMICAL PROPERTIES</scope>
    <scope>CATALYTIC ACTIVITY</scope>
</reference>
<reference key="5">
    <citation type="journal article" date="2004" name="Appl. Environ. Microbiol.">
        <title>Clustered pathway genes in aflatoxin biosynthesis.</title>
        <authorList>
            <person name="Yu J."/>
            <person name="Chang P.K."/>
            <person name="Ehrlich K.C."/>
            <person name="Cary J.W."/>
            <person name="Bhatnagar D."/>
            <person name="Cleveland T.E."/>
            <person name="Payne G.A."/>
            <person name="Linz J.E."/>
            <person name="Woloshuk C.P."/>
            <person name="Bennett J.W."/>
        </authorList>
    </citation>
    <scope>FUNCTION</scope>
    <scope>PATHWAY</scope>
    <scope>NOMENCLATURE</scope>
</reference>
<sequence>MTGLDMEIIFAKIKEEYARTDDVGKRQIQGHIRELQVGFYSDWDVVMRLSSGPLQVALTKVGIDLGIFRSLKESDTPITLAEIVKKTGASPRLLGRILRTQAAFGLIKETGPQEYTSSAFTDVFANSDAAGAVVQLFDISGPCTQILPDFLAERNYQDITSNKDCVFQKAFGSDLTMFEWMPQHPKHMESLGHLMALERPVSWVDHYPVLEELGGFPAPDKVLMVDIGGGFGQQSKALRAKFPDLPGRLIVQDIPQTLANAQPAAGIEFMEHNFFEPQPIQNAKFYYLRHVFHDWPDEQCVLILKQIIPAMGPESQILIDEMVIPSTGVPWQAAFTDLLMMNSLGGVERTRAEWDDLMEQVGLEIIQSKVYDSKEQAILVAVPKRT</sequence>
<comment type="function">
    <text evidence="4 5 6 12">Demethylsterigmatocystin 6-O-methyltransferase; part of the gene cluster that mediates the biosynthesis of aflatoxins, a group of polyketide-derived furanocoumarins, and part of the most toxic and carcinogenic compounds among the known mycotoxins (PubMed:10543813, PubMed:10806361, PubMed:15006741, PubMed:16349476). The four major aflatoxins produced by A.parasiticus are aflatoxin B1 (AFB1), aflatoxin B2 (AFB2), aflatoxin G1 (AFG1) and aflatoxin G2 (AFG2) (PubMed:15006741). Within the aflatoxin pathway, the methyltransferase aflO then catalyzes the modification of demethylsterigmatocystin (DMST) to sterigmatocystin (ST), and of dihydrodemethylsterigmatocystin (DMDHST) to dihydrosterigmatocystin (DHST) (PubMed:10543813, PubMed:10806361, PubMed:16349476). The biosynthesis of aflatoxins begins with the norsolorinic acid synthase aflC that combines a hexanoyl starter unit produced by the fatty acid synthase aflA/aflB and 7 malonyl-CoA extender units to synthesize the precursor NOR. The second step is the conversion of NOR to averantin and requires the norsolorinic acid ketoreductase aflD, which catalyzes the dehydration of norsolorinic acid to form (1'S)-averantin. The norsolorinic acid reductases aflE and aflF may also play a role in the conversion of NOR to AVN. The cytochrome P450 monooxygenase aflG then catalyzes the hydroxylation of AVN to 5'hydroxyaverantin (HAVN). The next step is performed by the 5'-hydroxyaverantin dehydrogenase aflH that transforms HAVN to 5'-oxoaverantin (OAVN) which is further converted to averufin (AVF) by aflK that plays a dual role in the pathway, as a 5'-oxoaverantin cyclase that mediates conversion of 5'-oxoaverantin, as well as a versicolorin B synthase in a later step in the pathway. The averufin oxidase aflI catalyzes the conversion of AVF to versiconal hemiacetal acetate (VHA). VHA is then the substrate for the versiconal hemiacetal acetate esterase aflJ to yield versiconal (VAL). Versicolorin B synthase aflK then converts VAL to versicolorin B (VERB) by closing the bisfuran ring of aflatoxin which is required for DNA-binding, thus giving to aflatoxin its activity as a mutagen. Then, the activity of the versicolorin B desaturase aflL leads to versicolorin A (VERA). A branch point starts from VERB since it can also be converted to dihydrodemethylsterigmatocystin (DMDHST), probably also by aflL, VERA being a precursor for aflatoxins B1 and G1, and DMDHST for aflatoxins B2 and G2. Next, the versicolorin reductase aflM and the cytochrome P450 monooxygenase aflN are involved in conversion of VERA to demethylsterigmatocystin (DMST). AflX and aflY seem also involved in this step, through probable aflX-mediated epoxide ring-opening step following versicolorin A oxidation and aflY-mediated Baeyer-Villiger oxidation required for the formation of the xanthone ring. The methyltransferase aflO then leads to the modification of DMST to sterigmatocystin (ST), and of DMDHST to dihydrosterigmatocystin (DHST). Both ST and DHST are then substrates of the O-methyltransferase aflP to yield O-methylsterigmatocystin (OMST) and dihydro-O-methylsterigmatocystin (DHOMST), respectively. Finally OMST is converted to aflatoxins B1 and G1, and DHOMST to aflatoxins B2 and G2, via the action of several enzymes including O-methylsterigmatocystin oxidoreductase aflQ, the cytochrome P450 monooxygenase aflU, but also the NADH-dependent flavin oxidoreductase nadA which is specifically required for the synthesis of AFG1 (PubMed:15006741).</text>
</comment>
<comment type="catalytic activity">
    <reaction evidence="4">
        <text>6-demethylsterigmatocystin + S-adenosyl-L-methionine = sterigmatocystin + S-adenosyl-L-homocysteine + H(+)</text>
        <dbReference type="Rhea" id="RHEA:11504"/>
        <dbReference type="ChEBI" id="CHEBI:15378"/>
        <dbReference type="ChEBI" id="CHEBI:18227"/>
        <dbReference type="ChEBI" id="CHEBI:18236"/>
        <dbReference type="ChEBI" id="CHEBI:57856"/>
        <dbReference type="ChEBI" id="CHEBI:59789"/>
        <dbReference type="EC" id="2.1.1.109"/>
    </reaction>
    <physiologicalReaction direction="left-to-right" evidence="4">
        <dbReference type="Rhea" id="RHEA:11505"/>
    </physiologicalReaction>
</comment>
<comment type="biophysicochemical properties">
    <kinetics>
        <KM evidence="6">0.94 M for demethylsterigmatocystin</KM>
        <KM evidence="6">2.5 uM for dihydrodemethylsterigmatocystin</KM>
    </kinetics>
    <phDependence>
        <text evidence="6">Optimum pH is 6.5-9.0.</text>
    </phDependence>
</comment>
<comment type="pathway">
    <text evidence="4 12">Mycotoxin biosynthesis; aflatoxin biosynthesis.</text>
</comment>
<comment type="similarity">
    <text evidence="3">Belongs to the class I-like SAM-binding methyltransferase superfamily. Cation-independent O-methyltransferase family. COMT subfamily.</text>
</comment>
<comment type="sequence caution" evidence="10">
    <conflict type="erroneous gene model prediction">
        <sequence resource="EMBL-CDS" id="KJK60770"/>
    </conflict>
    <text>The predicted gene P875_00052999 has been split into 2 genes: P875_00052999-1 (aflP) and P875_00052999-2 (aflO).</text>
</comment>
<keyword id="KW-0903">Direct protein sequencing</keyword>
<keyword id="KW-0489">Methyltransferase</keyword>
<keyword id="KW-1185">Reference proteome</keyword>
<keyword id="KW-0949">S-adenosyl-L-methionine</keyword>
<keyword id="KW-0808">Transferase</keyword>
<proteinExistence type="evidence at protein level"/>
<dbReference type="EC" id="2.1.1.109" evidence="4 6"/>
<dbReference type="EMBL" id="AB022905">
    <property type="protein sequence ID" value="BAA86103.1"/>
    <property type="molecule type" value="Genomic_DNA"/>
</dbReference>
<dbReference type="EMBL" id="AB022906">
    <property type="protein sequence ID" value="BAA86104.1"/>
    <property type="molecule type" value="mRNA"/>
</dbReference>
<dbReference type="EMBL" id="AY371490">
    <property type="protein sequence ID" value="AAS66016.1"/>
    <property type="molecule type" value="Genomic_DNA"/>
</dbReference>
<dbReference type="EMBL" id="JZEE01000729">
    <property type="protein sequence ID" value="KJK60770.1"/>
    <property type="status" value="ALT_SEQ"/>
    <property type="molecule type" value="Genomic_DNA"/>
</dbReference>
<dbReference type="SMR" id="Q9UQY0"/>
<dbReference type="STRING" id="1403190.Q9UQY0"/>
<dbReference type="OrthoDB" id="1606438at2759"/>
<dbReference type="BioCyc" id="MetaCyc:MONOMER-14042"/>
<dbReference type="BRENDA" id="2.1.1.109">
    <property type="organism ID" value="523"/>
</dbReference>
<dbReference type="UniPathway" id="UPA00287"/>
<dbReference type="Proteomes" id="UP000033540">
    <property type="component" value="Unassembled WGS sequence"/>
</dbReference>
<dbReference type="GO" id="GO:0047145">
    <property type="term" value="F:demethylsterigmatocystin 6-O-methyltransferase activity"/>
    <property type="evidence" value="ECO:0000314"/>
    <property type="project" value="UniProtKB"/>
</dbReference>
<dbReference type="GO" id="GO:0046983">
    <property type="term" value="F:protein dimerization activity"/>
    <property type="evidence" value="ECO:0007669"/>
    <property type="project" value="InterPro"/>
</dbReference>
<dbReference type="GO" id="GO:0045122">
    <property type="term" value="P:aflatoxin biosynthetic process"/>
    <property type="evidence" value="ECO:0000314"/>
    <property type="project" value="UniProtKB"/>
</dbReference>
<dbReference type="GO" id="GO:0032259">
    <property type="term" value="P:methylation"/>
    <property type="evidence" value="ECO:0007669"/>
    <property type="project" value="UniProtKB-KW"/>
</dbReference>
<dbReference type="FunFam" id="3.40.50.150:FF:000458">
    <property type="entry name" value="O-methyltransferase B"/>
    <property type="match status" value="1"/>
</dbReference>
<dbReference type="Gene3D" id="3.40.50.150">
    <property type="entry name" value="Vaccinia Virus protein VP39"/>
    <property type="match status" value="1"/>
</dbReference>
<dbReference type="Gene3D" id="1.10.10.10">
    <property type="entry name" value="Winged helix-like DNA-binding domain superfamily/Winged helix DNA-binding domain"/>
    <property type="match status" value="1"/>
</dbReference>
<dbReference type="InterPro" id="IPR016461">
    <property type="entry name" value="COMT-like"/>
</dbReference>
<dbReference type="InterPro" id="IPR001077">
    <property type="entry name" value="O_MeTrfase_dom"/>
</dbReference>
<dbReference type="InterPro" id="IPR012967">
    <property type="entry name" value="Plant_O-MeTrfase_dimerisation"/>
</dbReference>
<dbReference type="InterPro" id="IPR029063">
    <property type="entry name" value="SAM-dependent_MTases_sf"/>
</dbReference>
<dbReference type="InterPro" id="IPR036388">
    <property type="entry name" value="WH-like_DNA-bd_sf"/>
</dbReference>
<dbReference type="InterPro" id="IPR036390">
    <property type="entry name" value="WH_DNA-bd_sf"/>
</dbReference>
<dbReference type="PANTHER" id="PTHR43712:SF1">
    <property type="entry name" value="HYPOTHETICAL O-METHYLTRANSFERASE (EUROFUNG)-RELATED"/>
    <property type="match status" value="1"/>
</dbReference>
<dbReference type="PANTHER" id="PTHR43712">
    <property type="entry name" value="PUTATIVE (AFU_ORTHOLOGUE AFUA_4G14580)-RELATED"/>
    <property type="match status" value="1"/>
</dbReference>
<dbReference type="Pfam" id="PF08100">
    <property type="entry name" value="Dimerisation"/>
    <property type="match status" value="1"/>
</dbReference>
<dbReference type="Pfam" id="PF00891">
    <property type="entry name" value="Methyltransf_2"/>
    <property type="match status" value="1"/>
</dbReference>
<dbReference type="PIRSF" id="PIRSF005739">
    <property type="entry name" value="O-mtase"/>
    <property type="match status" value="1"/>
</dbReference>
<dbReference type="SUPFAM" id="SSF53335">
    <property type="entry name" value="S-adenosyl-L-methionine-dependent methyltransferases"/>
    <property type="match status" value="1"/>
</dbReference>
<dbReference type="SUPFAM" id="SSF46785">
    <property type="entry name" value="Winged helix' DNA-binding domain"/>
    <property type="match status" value="1"/>
</dbReference>
<dbReference type="PROSITE" id="PS51683">
    <property type="entry name" value="SAM_OMT_II"/>
    <property type="match status" value="1"/>
</dbReference>
<name>AFLO_ASPPU</name>
<protein>
    <recommendedName>
        <fullName evidence="11">Demethylsterigmatocystin 6-O-methyltransferase</fullName>
        <ecNumber evidence="4 6">2.1.1.109</ecNumber>
    </recommendedName>
    <alternativeName>
        <fullName evidence="9">Aflatoxin biosynthesis protein O</fullName>
    </alternativeName>
    <alternativeName>
        <fullName evidence="7">O-methyltransferase I</fullName>
        <shortName evidence="7">mt-I</shortName>
    </alternativeName>
</protein>
<gene>
    <name evidence="9" type="primary">aflO</name>
    <name evidence="7" type="synonym">dmtA</name>
    <name evidence="8" type="synonym">omtB</name>
    <name type="ORF">P875_00052999-2</name>
</gene>
<feature type="initiator methionine" description="Removed" evidence="4">
    <location>
        <position position="1"/>
    </location>
</feature>
<feature type="chain" id="PRO_5000049327" description="Demethylsterigmatocystin 6-O-methyltransferase">
    <location>
        <begin position="2"/>
        <end position="386"/>
    </location>
</feature>
<feature type="region of interest" description="Substrate binding" evidence="1">
    <location>
        <begin position="177"/>
        <end position="197"/>
    </location>
</feature>
<feature type="active site" description="Proton acceptor" evidence="3">
    <location>
        <position position="293"/>
    </location>
</feature>
<feature type="binding site" evidence="1">
    <location>
        <begin position="137"/>
        <end position="150"/>
    </location>
    <ligand>
        <name>substrate</name>
    </ligand>
</feature>
<feature type="binding site" evidence="2">
    <location>
        <begin position="228"/>
        <end position="229"/>
    </location>
    <ligand>
        <name>S-adenosyl-L-methionine</name>
        <dbReference type="ChEBI" id="CHEBI:59789"/>
    </ligand>
</feature>
<feature type="binding site" evidence="2">
    <location>
        <position position="253"/>
    </location>
    <ligand>
        <name>S-adenosyl-L-methionine</name>
        <dbReference type="ChEBI" id="CHEBI:59789"/>
    </ligand>
</feature>
<feature type="binding site" evidence="2">
    <location>
        <begin position="273"/>
        <end position="274"/>
    </location>
    <ligand>
        <name>S-adenosyl-L-methionine</name>
        <dbReference type="ChEBI" id="CHEBI:59789"/>
    </ligand>
</feature>
<feature type="binding site" evidence="2">
    <location>
        <position position="289"/>
    </location>
    <ligand>
        <name>S-adenosyl-L-methionine</name>
        <dbReference type="ChEBI" id="CHEBI:59789"/>
    </ligand>
</feature>
<feature type="sequence conflict" description="In Ref. 2; AAS66016 and 3; KJK60770." evidence="10" ref="2 3">
    <original>I</original>
    <variation>T</variation>
    <location>
        <position position="8"/>
    </location>
</feature>
<organism>
    <name type="scientific">Aspergillus parasiticus (strain ATCC 56775 / NRRL 5862 / SRRC 143 / SU-1)</name>
    <dbReference type="NCBI Taxonomy" id="1403190"/>
    <lineage>
        <taxon>Eukaryota</taxon>
        <taxon>Fungi</taxon>
        <taxon>Dikarya</taxon>
        <taxon>Ascomycota</taxon>
        <taxon>Pezizomycotina</taxon>
        <taxon>Eurotiomycetes</taxon>
        <taxon>Eurotiomycetidae</taxon>
        <taxon>Eurotiales</taxon>
        <taxon>Aspergillaceae</taxon>
        <taxon>Aspergillus</taxon>
        <taxon>Aspergillus subgen. Circumdati</taxon>
    </lineage>
</organism>